<comment type="function">
    <text evidence="1">Hormone which plays a role in endochondral ossification through regulation of cartilaginous growth plate chondrocytes proliferation and differentiation. May also be vasoactive and natriuretic (By similarity).</text>
</comment>
<comment type="subcellular location">
    <subcellularLocation>
        <location evidence="6">Secreted</location>
    </subcellularLocation>
</comment>
<comment type="tissue specificity">
    <text evidence="5">Expressed in brain, but not in atrium or ventricle.</text>
</comment>
<comment type="similarity">
    <text evidence="3">Belongs to the natriuretic peptide family.</text>
</comment>
<dbReference type="EMBL" id="AB087731">
    <property type="protein sequence ID" value="BAD02838.1"/>
    <property type="molecule type" value="mRNA"/>
</dbReference>
<dbReference type="GO" id="GO:0005576">
    <property type="term" value="C:extracellular region"/>
    <property type="evidence" value="ECO:0007669"/>
    <property type="project" value="UniProtKB-SubCell"/>
</dbReference>
<dbReference type="GO" id="GO:0005179">
    <property type="term" value="F:hormone activity"/>
    <property type="evidence" value="ECO:0007669"/>
    <property type="project" value="UniProtKB-KW"/>
</dbReference>
<dbReference type="GO" id="GO:0097746">
    <property type="term" value="P:blood vessel diameter maintenance"/>
    <property type="evidence" value="ECO:0007669"/>
    <property type="project" value="UniProtKB-KW"/>
</dbReference>
<dbReference type="GO" id="GO:0006182">
    <property type="term" value="P:cGMP biosynthetic process"/>
    <property type="evidence" value="ECO:0000250"/>
    <property type="project" value="UniProtKB"/>
</dbReference>
<dbReference type="GO" id="GO:0007168">
    <property type="term" value="P:receptor guanylyl cyclase signaling pathway"/>
    <property type="evidence" value="ECO:0000250"/>
    <property type="project" value="UniProtKB"/>
</dbReference>
<dbReference type="InterPro" id="IPR000663">
    <property type="entry name" value="Natr_peptide"/>
</dbReference>
<dbReference type="InterPro" id="IPR030480">
    <property type="entry name" value="Natr_peptide_CS"/>
</dbReference>
<dbReference type="PANTHER" id="PTHR12167">
    <property type="entry name" value="C-TYPE NATRIURETIC PEPTIDE"/>
    <property type="match status" value="1"/>
</dbReference>
<dbReference type="PANTHER" id="PTHR12167:SF2">
    <property type="entry name" value="C-TYPE NATRIURETIC PEPTIDE"/>
    <property type="match status" value="1"/>
</dbReference>
<dbReference type="Pfam" id="PF00212">
    <property type="entry name" value="ANP"/>
    <property type="match status" value="1"/>
</dbReference>
<dbReference type="PRINTS" id="PR00710">
    <property type="entry name" value="NATPEPTIDES"/>
</dbReference>
<dbReference type="SMART" id="SM00183">
    <property type="entry name" value="NAT_PEP"/>
    <property type="match status" value="1"/>
</dbReference>
<dbReference type="PROSITE" id="PS00263">
    <property type="entry name" value="NATRIURETIC_PEPTIDE"/>
    <property type="match status" value="1"/>
</dbReference>
<evidence type="ECO:0000250" key="1"/>
<evidence type="ECO:0000250" key="2">
    <source>
        <dbReference type="UniProtKB" id="P18145"/>
    </source>
</evidence>
<evidence type="ECO:0000255" key="3"/>
<evidence type="ECO:0000256" key="4">
    <source>
        <dbReference type="SAM" id="MobiDB-lite"/>
    </source>
</evidence>
<evidence type="ECO:0000269" key="5">
    <source>
    </source>
</evidence>
<evidence type="ECO:0000305" key="6"/>
<evidence type="ECO:0000312" key="7">
    <source>
        <dbReference type="EMBL" id="BAD02838.1"/>
    </source>
</evidence>
<sequence length="150" mass="15990">MSISSSSSSSSSSSSCLLLISLMLLAASCQGRPDLQHRNHKSQLAGLFGAEVAALLEDAGAADGSSGEEAALSQRAPPSIRALHPRSGRLGLRDDLEAEPPAENKPRRRLLKDFMSSRKMFRGRTKKMQQGRGCFGMKLDRIGSMSGLGC</sequence>
<name>ANFC_ACITR</name>
<accession>Q76KW6</accession>
<reference evidence="6 7" key="1">
    <citation type="journal article" date="2004" name="J. Mol. Endocrinol.">
        <title>Four natriuretic peptides (ANP, BNP, VNP and CNP) coexist in the sturgeon: identification of BNP in fish lineage.</title>
        <authorList>
            <person name="Kawakoshi A."/>
            <person name="Hyodo S."/>
            <person name="Inoue K."/>
            <person name="Kobayashi Y."/>
            <person name="Takei Y."/>
        </authorList>
    </citation>
    <scope>NUCLEOTIDE SEQUENCE [MRNA]</scope>
    <scope>TISSUE SPECIFICITY</scope>
</reference>
<feature type="signal peptide" evidence="3">
    <location>
        <begin position="1"/>
        <end position="31"/>
    </location>
</feature>
<feature type="propeptide" id="PRO_0000001577" evidence="1">
    <location>
        <begin position="32"/>
        <end position="127"/>
    </location>
</feature>
<feature type="peptide" id="PRO_0000001578" description="C-type natriuretic peptide" evidence="2">
    <location>
        <begin position="128"/>
        <end position="150"/>
    </location>
</feature>
<feature type="region of interest" description="Disordered" evidence="4">
    <location>
        <begin position="60"/>
        <end position="109"/>
    </location>
</feature>
<feature type="compositionally biased region" description="Low complexity" evidence="4">
    <location>
        <begin position="60"/>
        <end position="73"/>
    </location>
</feature>
<feature type="disulfide bond" evidence="2">
    <location>
        <begin position="134"/>
        <end position="150"/>
    </location>
</feature>
<gene>
    <name type="primary">cnp</name>
</gene>
<keyword id="KW-0165">Cleavage on pair of basic residues</keyword>
<keyword id="KW-1015">Disulfide bond</keyword>
<keyword id="KW-0372">Hormone</keyword>
<keyword id="KW-0964">Secreted</keyword>
<keyword id="KW-0732">Signal</keyword>
<keyword id="KW-0838">Vasoactive</keyword>
<proteinExistence type="evidence at transcript level"/>
<organism evidence="7">
    <name type="scientific">Acipenser transmontanus</name>
    <name type="common">White sturgeon</name>
    <dbReference type="NCBI Taxonomy" id="7904"/>
    <lineage>
        <taxon>Eukaryota</taxon>
        <taxon>Metazoa</taxon>
        <taxon>Chordata</taxon>
        <taxon>Craniata</taxon>
        <taxon>Vertebrata</taxon>
        <taxon>Euteleostomi</taxon>
        <taxon>Actinopterygii</taxon>
        <taxon>Chondrostei</taxon>
        <taxon>Acipenseriformes</taxon>
        <taxon>Acipenseridae</taxon>
        <taxon>Acipenser</taxon>
    </lineage>
</organism>
<protein>
    <recommendedName>
        <fullName>C-type natriuretic peptide</fullName>
    </recommendedName>
</protein>